<comment type="function">
    <text evidence="1 2">Involved in the modulation of the mitochondrial apoptotic pathway by ensuring the accumulation of cardiolipin (CL) in mitochondrial membranes. The triap1:prelid1 complex probably functions as a phosphatidic acid (PA) transporter across the mitochondrion intermembrane space to provide PA for cardiolipin CL synthesis in the inner membrane. Likewise, the triap1:prelid3a complex mediates the transfer of phosphatidic acid (PA) between liposomes (in vitro) and probably functions as a PA transporter across the mitochondrion intermembrane space (in vivo). Mediates cell survival by inhibiting activation of caspase-9 which prevents induction of apoptosis (By similarity). Required for pronephros development; probably involved at an early stage in the formation of pronephric components derived from the somatic layer (By similarity).</text>
</comment>
<comment type="catalytic activity">
    <reaction evidence="2">
        <text>a 1,2-diacyl-sn-glycero-3-phosphate(in) = a 1,2-diacyl-sn-glycero-3-phosphate(out)</text>
        <dbReference type="Rhea" id="RHEA:36435"/>
        <dbReference type="ChEBI" id="CHEBI:58608"/>
    </reaction>
</comment>
<comment type="subunit">
    <text evidence="2">Monomer. Forms a complex with prelid1 in the mitochondrion intermembrane space. Interacts with prelid3a.</text>
</comment>
<comment type="subcellular location">
    <subcellularLocation>
        <location evidence="2">Mitochondrion</location>
    </subcellularLocation>
    <subcellularLocation>
        <location evidence="2">Mitochondrion intermembrane space</location>
    </subcellularLocation>
</comment>
<comment type="similarity">
    <text evidence="3">Belongs to the TRIAP1/MDM35 family.</text>
</comment>
<dbReference type="EMBL" id="BC072207">
    <property type="protein sequence ID" value="AAH72207.1"/>
    <property type="molecule type" value="mRNA"/>
</dbReference>
<dbReference type="SMR" id="Q6INR6"/>
<dbReference type="DNASU" id="432296"/>
<dbReference type="GeneID" id="432296"/>
<dbReference type="KEGG" id="xla:432296"/>
<dbReference type="AGR" id="Xenbase:XB-GENE-6255715"/>
<dbReference type="CTD" id="432296"/>
<dbReference type="Xenbase" id="XB-GENE-6255715">
    <property type="gene designation" value="triap1.S"/>
</dbReference>
<dbReference type="OMA" id="KHKYDQC"/>
<dbReference type="OrthoDB" id="19091at2759"/>
<dbReference type="Proteomes" id="UP000186698">
    <property type="component" value="Chromosome 1S"/>
</dbReference>
<dbReference type="Bgee" id="432296">
    <property type="expression patterns" value="Expressed in muscle tissue and 19 other cell types or tissues"/>
</dbReference>
<dbReference type="GO" id="GO:0005829">
    <property type="term" value="C:cytosol"/>
    <property type="evidence" value="ECO:0007669"/>
    <property type="project" value="TreeGrafter"/>
</dbReference>
<dbReference type="GO" id="GO:0005758">
    <property type="term" value="C:mitochondrial intermembrane space"/>
    <property type="evidence" value="ECO:0007669"/>
    <property type="project" value="UniProtKB-SubCell"/>
</dbReference>
<dbReference type="GO" id="GO:0005739">
    <property type="term" value="C:mitochondrion"/>
    <property type="evidence" value="ECO:0000250"/>
    <property type="project" value="UniProtKB"/>
</dbReference>
<dbReference type="GO" id="GO:0005634">
    <property type="term" value="C:nucleus"/>
    <property type="evidence" value="ECO:0007669"/>
    <property type="project" value="TreeGrafter"/>
</dbReference>
<dbReference type="GO" id="GO:1990050">
    <property type="term" value="F:phosphatidic acid transfer activity"/>
    <property type="evidence" value="ECO:0007669"/>
    <property type="project" value="TreeGrafter"/>
</dbReference>
<dbReference type="GO" id="GO:0006915">
    <property type="term" value="P:apoptotic process"/>
    <property type="evidence" value="ECO:0007669"/>
    <property type="project" value="UniProtKB-KW"/>
</dbReference>
<dbReference type="GO" id="GO:1902166">
    <property type="term" value="P:negative regulation of intrinsic apoptotic signaling pathway in response to DNA damage by p53 class mediator"/>
    <property type="evidence" value="ECO:0000250"/>
    <property type="project" value="UniProtKB"/>
</dbReference>
<dbReference type="GO" id="GO:0045332">
    <property type="term" value="P:phospholipid translocation"/>
    <property type="evidence" value="ECO:0007669"/>
    <property type="project" value="TreeGrafter"/>
</dbReference>
<dbReference type="GO" id="GO:0015914">
    <property type="term" value="P:phospholipid transport"/>
    <property type="evidence" value="ECO:0000250"/>
    <property type="project" value="UniProtKB"/>
</dbReference>
<dbReference type="GO" id="GO:0048793">
    <property type="term" value="P:pronephros development"/>
    <property type="evidence" value="ECO:0000250"/>
    <property type="project" value="UniProtKB"/>
</dbReference>
<dbReference type="InterPro" id="IPR007918">
    <property type="entry name" value="MDM35_apoptosis"/>
</dbReference>
<dbReference type="PANTHER" id="PTHR46403">
    <property type="entry name" value="TP53-REGULATED INHIBITOR OF APOPTOSIS 1"/>
    <property type="match status" value="1"/>
</dbReference>
<dbReference type="PANTHER" id="PTHR46403:SF1">
    <property type="entry name" value="TP53-REGULATED INHIBITOR OF APOPTOSIS 1"/>
    <property type="match status" value="1"/>
</dbReference>
<dbReference type="Pfam" id="PF05254">
    <property type="entry name" value="UPF0203"/>
    <property type="match status" value="1"/>
</dbReference>
<dbReference type="PROSITE" id="PS51808">
    <property type="entry name" value="CHCH"/>
    <property type="match status" value="1"/>
</dbReference>
<sequence length="78" mass="8840">MNSVGEECTDMKRDYDQCFNRWFAEKFLKGAGSGDPCTELFRRYRECVQKAIKDKDIPVDGVDFMGPSKSKTESDGSS</sequence>
<protein>
    <recommendedName>
        <fullName>TP53-regulated inhibitor of apoptosis 1-A</fullName>
    </recommendedName>
    <alternativeName>
        <fullName>p53-inducible cell-survival factor-A</fullName>
        <shortName>p53csv-A</shortName>
    </alternativeName>
</protein>
<organism>
    <name type="scientific">Xenopus laevis</name>
    <name type="common">African clawed frog</name>
    <dbReference type="NCBI Taxonomy" id="8355"/>
    <lineage>
        <taxon>Eukaryota</taxon>
        <taxon>Metazoa</taxon>
        <taxon>Chordata</taxon>
        <taxon>Craniata</taxon>
        <taxon>Vertebrata</taxon>
        <taxon>Euteleostomi</taxon>
        <taxon>Amphibia</taxon>
        <taxon>Batrachia</taxon>
        <taxon>Anura</taxon>
        <taxon>Pipoidea</taxon>
        <taxon>Pipidae</taxon>
        <taxon>Xenopodinae</taxon>
        <taxon>Xenopus</taxon>
        <taxon>Xenopus</taxon>
    </lineage>
</organism>
<evidence type="ECO:0000250" key="1">
    <source>
        <dbReference type="UniProtKB" id="A9ULB4"/>
    </source>
</evidence>
<evidence type="ECO:0000250" key="2">
    <source>
        <dbReference type="UniProtKB" id="O43715"/>
    </source>
</evidence>
<evidence type="ECO:0000255" key="3"/>
<evidence type="ECO:0000255" key="4">
    <source>
        <dbReference type="PROSITE-ProRule" id="PRU01150"/>
    </source>
</evidence>
<evidence type="ECO:0000312" key="5">
    <source>
        <dbReference type="EMBL" id="AAH72207.1"/>
    </source>
</evidence>
<proteinExistence type="inferred from homology"/>
<accession>Q6INR6</accession>
<feature type="chain" id="PRO_0000391694" description="TP53-regulated inhibitor of apoptosis 1-A">
    <location>
        <begin position="1"/>
        <end position="78"/>
    </location>
</feature>
<feature type="domain" description="CHCH" evidence="4">
    <location>
        <begin position="5"/>
        <end position="55"/>
    </location>
</feature>
<feature type="coiled-coil region" evidence="2">
    <location>
        <begin position="1"/>
        <end position="52"/>
    </location>
</feature>
<feature type="short sequence motif" description="Cx9C motif 1" evidence="4">
    <location>
        <begin position="8"/>
        <end position="18"/>
    </location>
</feature>
<feature type="short sequence motif" description="Cx9C motif 2" evidence="4">
    <location>
        <begin position="37"/>
        <end position="47"/>
    </location>
</feature>
<feature type="site" description="Important for interaction with prelid3a" evidence="2">
    <location>
        <position position="27"/>
    </location>
</feature>
<feature type="site" description="Important for interaction with prelid3a" evidence="2">
    <location>
        <position position="41"/>
    </location>
</feature>
<feature type="disulfide bond" evidence="4">
    <location>
        <begin position="8"/>
        <end position="47"/>
    </location>
</feature>
<feature type="disulfide bond" evidence="4">
    <location>
        <begin position="18"/>
        <end position="37"/>
    </location>
</feature>
<name>TRIAA_XENLA</name>
<keyword id="KW-0053">Apoptosis</keyword>
<keyword id="KW-0175">Coiled coil</keyword>
<keyword id="KW-0217">Developmental protein</keyword>
<keyword id="KW-1015">Disulfide bond</keyword>
<keyword id="KW-0445">Lipid transport</keyword>
<keyword id="KW-0496">Mitochondrion</keyword>
<keyword id="KW-1185">Reference proteome</keyword>
<keyword id="KW-0813">Transport</keyword>
<gene>
    <name type="primary">triap1-a</name>
</gene>
<reference evidence="5" key="1">
    <citation type="submission" date="2004-06" db="EMBL/GenBank/DDBJ databases">
        <authorList>
            <consortium name="NIH - Xenopus Gene Collection (XGC) project"/>
        </authorList>
    </citation>
    <scope>NUCLEOTIDE SEQUENCE [LARGE SCALE MRNA]</scope>
    <source>
        <tissue evidence="5">Ovary</tissue>
    </source>
</reference>